<comment type="function">
    <text evidence="1">Catalyzes the formation of N(4)-acetylcytidine (ac(4)C) at the wobble position of elongator tRNA(Met), using acetate and ATP as substrates. First activates an acetate ion to form acetyladenylate (Ac-AMP) and then transfers the acetyl group to tRNA to form ac(4)C34.</text>
</comment>
<comment type="catalytic activity">
    <reaction evidence="1">
        <text>cytidine(34) in elongator tRNA(Met) + acetate + ATP = N(4)-acetylcytidine(34) in elongator tRNA(Met) + AMP + diphosphate</text>
        <dbReference type="Rhea" id="RHEA:58144"/>
        <dbReference type="Rhea" id="RHEA-COMP:10693"/>
        <dbReference type="Rhea" id="RHEA-COMP:10694"/>
        <dbReference type="ChEBI" id="CHEBI:30089"/>
        <dbReference type="ChEBI" id="CHEBI:30616"/>
        <dbReference type="ChEBI" id="CHEBI:33019"/>
        <dbReference type="ChEBI" id="CHEBI:74900"/>
        <dbReference type="ChEBI" id="CHEBI:82748"/>
        <dbReference type="ChEBI" id="CHEBI:456215"/>
    </reaction>
</comment>
<comment type="subcellular location">
    <subcellularLocation>
        <location evidence="1">Cytoplasm</location>
    </subcellularLocation>
</comment>
<comment type="similarity">
    <text evidence="1">Belongs to the TmcAL family.</text>
</comment>
<feature type="chain" id="PRO_1000198853" description="tRNA(Met) cytidine acetate ligase">
    <location>
        <begin position="1"/>
        <end position="409"/>
    </location>
</feature>
<feature type="binding site" evidence="1">
    <location>
        <begin position="7"/>
        <end position="20"/>
    </location>
    <ligand>
        <name>ATP</name>
        <dbReference type="ChEBI" id="CHEBI:30616"/>
    </ligand>
</feature>
<feature type="binding site" evidence="1">
    <location>
        <position position="102"/>
    </location>
    <ligand>
        <name>ATP</name>
        <dbReference type="ChEBI" id="CHEBI:30616"/>
    </ligand>
</feature>
<feature type="binding site" evidence="1">
    <location>
        <position position="169"/>
    </location>
    <ligand>
        <name>ATP</name>
        <dbReference type="ChEBI" id="CHEBI:30616"/>
    </ligand>
</feature>
<feature type="binding site" evidence="1">
    <location>
        <position position="194"/>
    </location>
    <ligand>
        <name>ATP</name>
        <dbReference type="ChEBI" id="CHEBI:30616"/>
    </ligand>
</feature>
<reference key="1">
    <citation type="journal article" date="2007" name="PLoS ONE">
        <title>Analysis of the neurotoxin complex genes in Clostridium botulinum A1-A4 and B1 strains: BoNT/A3, /Ba4 and /B1 clusters are located within plasmids.</title>
        <authorList>
            <person name="Smith T.J."/>
            <person name="Hill K.K."/>
            <person name="Foley B.T."/>
            <person name="Detter J.C."/>
            <person name="Munk A.C."/>
            <person name="Bruce D.C."/>
            <person name="Doggett N.A."/>
            <person name="Smith L.A."/>
            <person name="Marks J.D."/>
            <person name="Xie G."/>
            <person name="Brettin T.S."/>
        </authorList>
    </citation>
    <scope>NUCLEOTIDE SEQUENCE [LARGE SCALE GENOMIC DNA]</scope>
    <source>
        <strain>Loch Maree / Type A3</strain>
    </source>
</reference>
<organism>
    <name type="scientific">Clostridium botulinum (strain Loch Maree / Type A3)</name>
    <dbReference type="NCBI Taxonomy" id="498214"/>
    <lineage>
        <taxon>Bacteria</taxon>
        <taxon>Bacillati</taxon>
        <taxon>Bacillota</taxon>
        <taxon>Clostridia</taxon>
        <taxon>Eubacteriales</taxon>
        <taxon>Clostridiaceae</taxon>
        <taxon>Clostridium</taxon>
    </lineage>
</organism>
<gene>
    <name evidence="1" type="primary">tmcAL</name>
    <name type="ordered locus">CLK_1872</name>
</gene>
<accession>B1KX40</accession>
<protein>
    <recommendedName>
        <fullName evidence="1">tRNA(Met) cytidine acetate ligase</fullName>
        <ecNumber evidence="1">6.3.4.-</ecNumber>
    </recommendedName>
</protein>
<keyword id="KW-0067">ATP-binding</keyword>
<keyword id="KW-0963">Cytoplasm</keyword>
<keyword id="KW-0436">Ligase</keyword>
<keyword id="KW-0547">Nucleotide-binding</keyword>
<keyword id="KW-0694">RNA-binding</keyword>
<keyword id="KW-0819">tRNA processing</keyword>
<keyword id="KW-0820">tRNA-binding</keyword>
<sequence>MNVSAIVVEYNPMHNGHLHHIKKTKELTNCDALVCIMSGNFVQRGFPSILDKWTKASIAISNGVDLVIELPTLYSLSSAEFFSFGAVSILDSLNIINSICFGSEIGNINALQDIASTLLEEPLEYKILLKNYLDKGISFAKARNLALVELNRDNKIMSENINKILSLSNNILGIEYLKSLLLLNSSIKPFTITREGADYKDENLHKEYSSASSIRKYLKENKNINILKDFLPLEGFLEFKRLITKGYNFSMEDSMINYIRYKYISGYKNLHNLIDVSEGLDNRIYKSLEKNFTYDSLVGEIKSKRYAYSRIGRILCQYFIGFENYDLNSLLKSTPNYMRVLASNEIGLKVLKKIKRHSSTNIYTKIPKNTNTLLNLDIKATNAYSLLNNNIRFNEDYFRSPIIIKNTIY</sequence>
<evidence type="ECO:0000255" key="1">
    <source>
        <dbReference type="HAMAP-Rule" id="MF_01539"/>
    </source>
</evidence>
<proteinExistence type="inferred from homology"/>
<name>TMCAL_CLOBM</name>
<dbReference type="EC" id="6.3.4.-" evidence="1"/>
<dbReference type="EMBL" id="CP000962">
    <property type="protein sequence ID" value="ACA54857.1"/>
    <property type="molecule type" value="Genomic_DNA"/>
</dbReference>
<dbReference type="RefSeq" id="WP_012342906.1">
    <property type="nucleotide sequence ID" value="NC_010520.1"/>
</dbReference>
<dbReference type="SMR" id="B1KX40"/>
<dbReference type="KEGG" id="cbl:CLK_1872"/>
<dbReference type="HOGENOM" id="CLU_038915_0_1_9"/>
<dbReference type="GO" id="GO:0005737">
    <property type="term" value="C:cytoplasm"/>
    <property type="evidence" value="ECO:0007669"/>
    <property type="project" value="UniProtKB-SubCell"/>
</dbReference>
<dbReference type="GO" id="GO:0005524">
    <property type="term" value="F:ATP binding"/>
    <property type="evidence" value="ECO:0007669"/>
    <property type="project" value="UniProtKB-KW"/>
</dbReference>
<dbReference type="GO" id="GO:0016879">
    <property type="term" value="F:ligase activity, forming carbon-nitrogen bonds"/>
    <property type="evidence" value="ECO:0007669"/>
    <property type="project" value="UniProtKB-UniRule"/>
</dbReference>
<dbReference type="GO" id="GO:0000049">
    <property type="term" value="F:tRNA binding"/>
    <property type="evidence" value="ECO:0007669"/>
    <property type="project" value="UniProtKB-KW"/>
</dbReference>
<dbReference type="GO" id="GO:0006400">
    <property type="term" value="P:tRNA modification"/>
    <property type="evidence" value="ECO:0007669"/>
    <property type="project" value="UniProtKB-UniRule"/>
</dbReference>
<dbReference type="Gene3D" id="3.40.50.620">
    <property type="entry name" value="HUPs"/>
    <property type="match status" value="1"/>
</dbReference>
<dbReference type="HAMAP" id="MF_01539">
    <property type="entry name" value="TmcAL"/>
    <property type="match status" value="1"/>
</dbReference>
<dbReference type="InterPro" id="IPR014729">
    <property type="entry name" value="Rossmann-like_a/b/a_fold"/>
</dbReference>
<dbReference type="InterPro" id="IPR008513">
    <property type="entry name" value="tRNA(Met)_cyd_acetate_ligase"/>
</dbReference>
<dbReference type="NCBIfam" id="NF010191">
    <property type="entry name" value="PRK13670.1"/>
    <property type="match status" value="1"/>
</dbReference>
<dbReference type="PANTHER" id="PTHR37825">
    <property type="entry name" value="TRNA(MET) CYTIDINE ACETATE LIGASE"/>
    <property type="match status" value="1"/>
</dbReference>
<dbReference type="PANTHER" id="PTHR37825:SF1">
    <property type="entry name" value="TRNA(MET) CYTIDINE ACETATE LIGASE"/>
    <property type="match status" value="1"/>
</dbReference>
<dbReference type="Pfam" id="PF05636">
    <property type="entry name" value="HIGH_NTase1"/>
    <property type="match status" value="1"/>
</dbReference>
<dbReference type="SUPFAM" id="SSF52374">
    <property type="entry name" value="Nucleotidylyl transferase"/>
    <property type="match status" value="1"/>
</dbReference>